<dbReference type="EC" id="4.2.99.18" evidence="1"/>
<dbReference type="EMBL" id="AE000516">
    <property type="protein sequence ID" value="AAK48142.1"/>
    <property type="status" value="ALT_INIT"/>
    <property type="molecule type" value="Genomic_DNA"/>
</dbReference>
<dbReference type="PIR" id="C70790">
    <property type="entry name" value="C70790"/>
</dbReference>
<dbReference type="RefSeq" id="WP_003419724.1">
    <property type="nucleotide sequence ID" value="NZ_KK341227.1"/>
</dbReference>
<dbReference type="SMR" id="P9WQ10"/>
<dbReference type="GeneID" id="45427669"/>
<dbReference type="KEGG" id="mtc:MT3775"/>
<dbReference type="PATRIC" id="fig|83331.31.peg.4065"/>
<dbReference type="HOGENOM" id="CLU_012862_3_3_11"/>
<dbReference type="Proteomes" id="UP000001020">
    <property type="component" value="Chromosome"/>
</dbReference>
<dbReference type="GO" id="GO:0051539">
    <property type="term" value="F:4 iron, 4 sulfur cluster binding"/>
    <property type="evidence" value="ECO:0007669"/>
    <property type="project" value="UniProtKB-UniRule"/>
</dbReference>
<dbReference type="GO" id="GO:0140078">
    <property type="term" value="F:class I DNA-(apurinic or apyrimidinic site) endonuclease activity"/>
    <property type="evidence" value="ECO:0007669"/>
    <property type="project" value="UniProtKB-EC"/>
</dbReference>
<dbReference type="GO" id="GO:0003677">
    <property type="term" value="F:DNA binding"/>
    <property type="evidence" value="ECO:0007669"/>
    <property type="project" value="UniProtKB-UniRule"/>
</dbReference>
<dbReference type="GO" id="GO:0019104">
    <property type="term" value="F:DNA N-glycosylase activity"/>
    <property type="evidence" value="ECO:0007669"/>
    <property type="project" value="UniProtKB-UniRule"/>
</dbReference>
<dbReference type="GO" id="GO:0046872">
    <property type="term" value="F:metal ion binding"/>
    <property type="evidence" value="ECO:0007669"/>
    <property type="project" value="UniProtKB-KW"/>
</dbReference>
<dbReference type="GO" id="GO:0006285">
    <property type="term" value="P:base-excision repair, AP site formation"/>
    <property type="evidence" value="ECO:0007669"/>
    <property type="project" value="TreeGrafter"/>
</dbReference>
<dbReference type="CDD" id="cd00056">
    <property type="entry name" value="ENDO3c"/>
    <property type="match status" value="1"/>
</dbReference>
<dbReference type="FunFam" id="1.10.1670.10:FF:000001">
    <property type="entry name" value="Endonuclease III"/>
    <property type="match status" value="1"/>
</dbReference>
<dbReference type="FunFam" id="1.10.340.30:FF:000001">
    <property type="entry name" value="Endonuclease III"/>
    <property type="match status" value="1"/>
</dbReference>
<dbReference type="Gene3D" id="1.10.1670.10">
    <property type="entry name" value="Helix-hairpin-Helix base-excision DNA repair enzymes (C-terminal)"/>
    <property type="match status" value="1"/>
</dbReference>
<dbReference type="Gene3D" id="1.10.340.30">
    <property type="entry name" value="Hypothetical protein, domain 2"/>
    <property type="match status" value="1"/>
</dbReference>
<dbReference type="HAMAP" id="MF_00942">
    <property type="entry name" value="Nth"/>
    <property type="match status" value="1"/>
</dbReference>
<dbReference type="InterPro" id="IPR011257">
    <property type="entry name" value="DNA_glycosylase"/>
</dbReference>
<dbReference type="InterPro" id="IPR004036">
    <property type="entry name" value="Endonuclease-III-like_CS2"/>
</dbReference>
<dbReference type="InterPro" id="IPR003651">
    <property type="entry name" value="Endonuclease3_FeS-loop_motif"/>
</dbReference>
<dbReference type="InterPro" id="IPR004035">
    <property type="entry name" value="Endouclease-III_FeS-bd_BS"/>
</dbReference>
<dbReference type="InterPro" id="IPR003265">
    <property type="entry name" value="HhH-GPD_domain"/>
</dbReference>
<dbReference type="InterPro" id="IPR023170">
    <property type="entry name" value="HhH_base_excis_C"/>
</dbReference>
<dbReference type="InterPro" id="IPR000445">
    <property type="entry name" value="HhH_motif"/>
</dbReference>
<dbReference type="InterPro" id="IPR005759">
    <property type="entry name" value="Nth"/>
</dbReference>
<dbReference type="NCBIfam" id="TIGR01083">
    <property type="entry name" value="nth"/>
    <property type="match status" value="1"/>
</dbReference>
<dbReference type="PANTHER" id="PTHR10359">
    <property type="entry name" value="A/G-SPECIFIC ADENINE GLYCOSYLASE/ENDONUCLEASE III"/>
    <property type="match status" value="1"/>
</dbReference>
<dbReference type="PANTHER" id="PTHR10359:SF18">
    <property type="entry name" value="ENDONUCLEASE III"/>
    <property type="match status" value="1"/>
</dbReference>
<dbReference type="Pfam" id="PF10576">
    <property type="entry name" value="EndIII_4Fe-2S"/>
    <property type="match status" value="1"/>
</dbReference>
<dbReference type="Pfam" id="PF00633">
    <property type="entry name" value="HHH"/>
    <property type="match status" value="1"/>
</dbReference>
<dbReference type="Pfam" id="PF00730">
    <property type="entry name" value="HhH-GPD"/>
    <property type="match status" value="1"/>
</dbReference>
<dbReference type="SMART" id="SM00478">
    <property type="entry name" value="ENDO3c"/>
    <property type="match status" value="1"/>
</dbReference>
<dbReference type="SMART" id="SM00525">
    <property type="entry name" value="FES"/>
    <property type="match status" value="1"/>
</dbReference>
<dbReference type="SUPFAM" id="SSF48150">
    <property type="entry name" value="DNA-glycosylase"/>
    <property type="match status" value="1"/>
</dbReference>
<dbReference type="PROSITE" id="PS00764">
    <property type="entry name" value="ENDONUCLEASE_III_1"/>
    <property type="match status" value="1"/>
</dbReference>
<dbReference type="PROSITE" id="PS01155">
    <property type="entry name" value="ENDONUCLEASE_III_2"/>
    <property type="match status" value="1"/>
</dbReference>
<feature type="chain" id="PRO_0000426857" description="Endonuclease III">
    <location>
        <begin position="1"/>
        <end position="245"/>
    </location>
</feature>
<feature type="domain" description="HhH" evidence="1">
    <location>
        <begin position="119"/>
        <end position="138"/>
    </location>
</feature>
<feature type="binding site" evidence="1">
    <location>
        <position position="198"/>
    </location>
    <ligand>
        <name>[4Fe-4S] cluster</name>
        <dbReference type="ChEBI" id="CHEBI:49883"/>
    </ligand>
</feature>
<feature type="binding site" evidence="1">
    <location>
        <position position="205"/>
    </location>
    <ligand>
        <name>[4Fe-4S] cluster</name>
        <dbReference type="ChEBI" id="CHEBI:49883"/>
    </ligand>
</feature>
<feature type="binding site" evidence="1">
    <location>
        <position position="208"/>
    </location>
    <ligand>
        <name>[4Fe-4S] cluster</name>
        <dbReference type="ChEBI" id="CHEBI:49883"/>
    </ligand>
</feature>
<feature type="binding site" evidence="1">
    <location>
        <position position="214"/>
    </location>
    <ligand>
        <name>[4Fe-4S] cluster</name>
        <dbReference type="ChEBI" id="CHEBI:49883"/>
    </ligand>
</feature>
<keyword id="KW-0004">4Fe-4S</keyword>
<keyword id="KW-0227">DNA damage</keyword>
<keyword id="KW-0234">DNA repair</keyword>
<keyword id="KW-0238">DNA-binding</keyword>
<keyword id="KW-0326">Glycosidase</keyword>
<keyword id="KW-0378">Hydrolase</keyword>
<keyword id="KW-0408">Iron</keyword>
<keyword id="KW-0411">Iron-sulfur</keyword>
<keyword id="KW-0456">Lyase</keyword>
<keyword id="KW-0479">Metal-binding</keyword>
<keyword id="KW-0511">Multifunctional enzyme</keyword>
<keyword id="KW-1185">Reference proteome</keyword>
<evidence type="ECO:0000255" key="1">
    <source>
        <dbReference type="HAMAP-Rule" id="MF_00942"/>
    </source>
</evidence>
<evidence type="ECO:0000305" key="2"/>
<organism>
    <name type="scientific">Mycobacterium tuberculosis (strain CDC 1551 / Oshkosh)</name>
    <dbReference type="NCBI Taxonomy" id="83331"/>
    <lineage>
        <taxon>Bacteria</taxon>
        <taxon>Bacillati</taxon>
        <taxon>Actinomycetota</taxon>
        <taxon>Actinomycetes</taxon>
        <taxon>Mycobacteriales</taxon>
        <taxon>Mycobacteriaceae</taxon>
        <taxon>Mycobacterium</taxon>
        <taxon>Mycobacterium tuberculosis complex</taxon>
    </lineage>
</organism>
<proteinExistence type="inferred from homology"/>
<comment type="function">
    <text evidence="1">DNA repair enzyme that has both DNA N-glycosylase activity and AP-lyase activity. The DNA N-glycosylase activity releases various damaged pyrimidines from DNA by cleaving the N-glycosidic bond, leaving an AP (apurinic/apyrimidinic) site. The AP-lyase activity cleaves the phosphodiester bond 3' to the AP site by a beta-elimination, leaving a 3'-terminal unsaturated sugar and a product with a terminal 5'-phosphate.</text>
</comment>
<comment type="catalytic activity">
    <reaction evidence="1">
        <text>2'-deoxyribonucleotide-(2'-deoxyribose 5'-phosphate)-2'-deoxyribonucleotide-DNA = a 3'-end 2'-deoxyribonucleotide-(2,3-dehydro-2,3-deoxyribose 5'-phosphate)-DNA + a 5'-end 5'-phospho-2'-deoxyribonucleoside-DNA + H(+)</text>
        <dbReference type="Rhea" id="RHEA:66592"/>
        <dbReference type="Rhea" id="RHEA-COMP:13180"/>
        <dbReference type="Rhea" id="RHEA-COMP:16897"/>
        <dbReference type="Rhea" id="RHEA-COMP:17067"/>
        <dbReference type="ChEBI" id="CHEBI:15378"/>
        <dbReference type="ChEBI" id="CHEBI:136412"/>
        <dbReference type="ChEBI" id="CHEBI:157695"/>
        <dbReference type="ChEBI" id="CHEBI:167181"/>
        <dbReference type="EC" id="4.2.99.18"/>
    </reaction>
</comment>
<comment type="cofactor">
    <cofactor evidence="1">
        <name>[4Fe-4S] cluster</name>
        <dbReference type="ChEBI" id="CHEBI:49883"/>
    </cofactor>
    <text evidence="1">Binds 1 [4Fe-4S] cluster.</text>
</comment>
<comment type="similarity">
    <text evidence="1">Belongs to the Nth/MutY family.</text>
</comment>
<comment type="sequence caution" evidence="2">
    <conflict type="erroneous initiation">
        <sequence resource="EMBL-CDS" id="AAK48142"/>
    </conflict>
    <text>Extended N-terminus.</text>
</comment>
<sequence>MPGRWSAETRLALVRRARRMNRALAQAFPHVYCELDFTTPLELAVATILSAQSTDKRVNLTTPALFARYRTARDYAQADRTELESLIRPTGFYRNKAASLIGLGQALVERFGGEVPATMDKLVTLPGVGRKTANVILGNAFGIPGITVDTHFGRLVRRWRWTTAEDPVKVEQAVGELIERKEWTLLSHRVIFHGRRVCHARRPACGVCVLAKDCPSFGLGPTEPLLAAPLVQGPETDHLLALAGL</sequence>
<reference key="1">
    <citation type="journal article" date="2002" name="J. Bacteriol.">
        <title>Whole-genome comparison of Mycobacterium tuberculosis clinical and laboratory strains.</title>
        <authorList>
            <person name="Fleischmann R.D."/>
            <person name="Alland D."/>
            <person name="Eisen J.A."/>
            <person name="Carpenter L."/>
            <person name="White O."/>
            <person name="Peterson J.D."/>
            <person name="DeBoy R.T."/>
            <person name="Dodson R.J."/>
            <person name="Gwinn M.L."/>
            <person name="Haft D.H."/>
            <person name="Hickey E.K."/>
            <person name="Kolonay J.F."/>
            <person name="Nelson W.C."/>
            <person name="Umayam L.A."/>
            <person name="Ermolaeva M.D."/>
            <person name="Salzberg S.L."/>
            <person name="Delcher A."/>
            <person name="Utterback T.R."/>
            <person name="Weidman J.F."/>
            <person name="Khouri H.M."/>
            <person name="Gill J."/>
            <person name="Mikula A."/>
            <person name="Bishai W."/>
            <person name="Jacobs W.R. Jr."/>
            <person name="Venter J.C."/>
            <person name="Fraser C.M."/>
        </authorList>
    </citation>
    <scope>NUCLEOTIDE SEQUENCE [LARGE SCALE GENOMIC DNA]</scope>
    <source>
        <strain>CDC 1551 / Oshkosh</strain>
    </source>
</reference>
<protein>
    <recommendedName>
        <fullName evidence="1">Endonuclease III</fullName>
        <ecNumber evidence="1">4.2.99.18</ecNumber>
    </recommendedName>
    <alternativeName>
        <fullName evidence="1">DNA-(apurinic or apyrimidinic site) lyase</fullName>
    </alternativeName>
</protein>
<name>END3_MYCTO</name>
<gene>
    <name evidence="1" type="primary">nth</name>
    <name type="ordered locus">MT3775</name>
</gene>
<accession>P9WQ10</accession>
<accession>L0TEW4</accession>
<accession>O69642</accession>
<accession>P63540</accession>